<comment type="function">
    <text evidence="1 4 5 7 11">Essential hematopoietic-specific regulator of the actin cytoskeleton (Probable). Controls lymphocyte development, activation, proliferation and homeostasis, erythrocyte membrane stability, as well as phagocytosis and migration by neutrophils and macrophages (PubMed:16417406, PubMed:17696648). Component of the WAVE2 complex which signals downstream of RAC to stimulate F-actin polymerization. Required for stabilization and/or translation of the WAVE2 complex proteins in hematopoietic cells (By similarity). Within the WAVE2 complex, enables the cortical actin network to restrain excessive degranulation and granule release by T-cells (PubMed:32647003). Required for efficient T-lymphocyte and neutrophil migration (PubMed:32647003). Exhibits complex cycles of activation and inhibition to generate waves of propagating the assembly with actin (PubMed:16417406). Also involved in mechanisms WAVE-independent to regulate myosin and actin polymerization during neutrophil chemotaxis (PubMed:17696648). In T-cells, required for proper mechanistic target of rapamycin complex 2 (mTORC2)-dependent AKT phosphorylation, cell proliferation and cytokine secretion, including that of IL2 and TNF (PubMed:32647003).</text>
</comment>
<comment type="subunit">
    <text evidence="4 7">In hematopoietic cells, component of the WAVE2 complex composed of ABI1, CYFIP1/SRA1, NCKAP1L/HEM1 and WASF2/WAVE2 (PubMed:16417406, PubMed:32647003). Interacts with ARHGAP4, PIK3C3/VPS34 and PPP1R12A/MYPT1 (PubMed:16417406). Interacts with mammalian target of rapamycin complex 2 (mTORC2) components, including MTOR and RICTOR (PubMed:32647003).</text>
</comment>
<comment type="subcellular location">
    <subcellularLocation>
        <location evidence="4">Cell membrane</location>
        <topology evidence="12">Single-pass membrane protein</topology>
        <orientation evidence="12">Cytoplasmic side</orientation>
    </subcellularLocation>
    <subcellularLocation>
        <location evidence="4">Cytoplasm</location>
    </subcellularLocation>
    <text evidence="4 5">Localizes to the leading edge of polarized neutrophils.</text>
</comment>
<comment type="alternative products">
    <event type="alternative splicing"/>
    <isoform>
        <id>P55160-1</id>
        <name>1</name>
        <sequence type="displayed"/>
    </isoform>
    <isoform>
        <id>P55160-2</id>
        <name>2</name>
        <sequence type="described" ref="VSP_045191"/>
    </isoform>
</comment>
<comment type="tissue specificity">
    <text evidence="4 6 7 8">Expressed only in cells of hematopoietic origin (PubMed:1932118, PubMed:7643388). Expressed in neutrophils (at protein level) (PubMed:16417406). Expressed in T-cells (at protein level) (PubMed:32647003).</text>
</comment>
<comment type="disease" evidence="7">
    <disease id="DI-05896">
        <name>Immunodeficiency 72 with autoinflammation and lymphoproliferation</name>
        <acronym>IMD72</acronym>
        <description>An autosomal recessive immunologic disorder characterized by onset in the first year of life, recurrent bacterial and viral skin infections, severe respiratory tract infections leading to pneumonia and bronchiectasis, and poor specific antibody responses. Patients also exhibit atopic and inflammatory disease alongside chronic hepatosplenomegaly, lymphoproliferation and lymphadenopathy, and autoimmune manifestations.</description>
        <dbReference type="MIM" id="618982"/>
    </disease>
    <text>The disease is caused by variants affecting the gene represented in this entry.</text>
</comment>
<comment type="similarity">
    <text evidence="12">Belongs to the HEM-1/HEM-2 family.</text>
</comment>
<comment type="sequence caution" evidence="12">
    <conflict type="erroneous initiation">
        <sequence resource="EMBL-CDS" id="AAA35964"/>
    </conflict>
    <text>Truncated N-terminus.</text>
</comment>
<dbReference type="EMBL" id="M58285">
    <property type="protein sequence ID" value="AAA35964.1"/>
    <property type="status" value="ALT_INIT"/>
    <property type="molecule type" value="mRNA"/>
</dbReference>
<dbReference type="EMBL" id="AK300783">
    <property type="protein sequence ID" value="BAG62447.1"/>
    <property type="molecule type" value="mRNA"/>
</dbReference>
<dbReference type="EMBL" id="AC025570">
    <property type="status" value="NOT_ANNOTATED_CDS"/>
    <property type="molecule type" value="Genomic_DNA"/>
</dbReference>
<dbReference type="EMBL" id="AC068789">
    <property type="status" value="NOT_ANNOTATED_CDS"/>
    <property type="molecule type" value="Genomic_DNA"/>
</dbReference>
<dbReference type="EMBL" id="AC079313">
    <property type="status" value="NOT_ANNOTATED_CDS"/>
    <property type="molecule type" value="Genomic_DNA"/>
</dbReference>
<dbReference type="EMBL" id="CH471054">
    <property type="protein sequence ID" value="EAW96787.1"/>
    <property type="molecule type" value="Genomic_DNA"/>
</dbReference>
<dbReference type="EMBL" id="BC093769">
    <property type="protein sequence ID" value="AAH93769.1"/>
    <property type="molecule type" value="mRNA"/>
</dbReference>
<dbReference type="EMBL" id="BC093771">
    <property type="protein sequence ID" value="AAH93771.1"/>
    <property type="molecule type" value="mRNA"/>
</dbReference>
<dbReference type="CCDS" id="CCDS31813.1">
    <molecule id="P55160-1"/>
</dbReference>
<dbReference type="CCDS" id="CCDS53799.1">
    <molecule id="P55160-2"/>
</dbReference>
<dbReference type="PIR" id="S36666">
    <property type="entry name" value="S36666"/>
</dbReference>
<dbReference type="RefSeq" id="NP_001171905.1">
    <molecule id="P55160-2"/>
    <property type="nucleotide sequence ID" value="NM_001184976.2"/>
</dbReference>
<dbReference type="RefSeq" id="NP_005328.2">
    <molecule id="P55160-1"/>
    <property type="nucleotide sequence ID" value="NM_005337.4"/>
</dbReference>
<dbReference type="SMR" id="P55160"/>
<dbReference type="BioGRID" id="109321">
    <property type="interactions" value="17"/>
</dbReference>
<dbReference type="FunCoup" id="P55160">
    <property type="interactions" value="564"/>
</dbReference>
<dbReference type="IntAct" id="P55160">
    <property type="interactions" value="6"/>
</dbReference>
<dbReference type="MINT" id="P55160"/>
<dbReference type="STRING" id="9606.ENSP00000293373"/>
<dbReference type="iPTMnet" id="P55160"/>
<dbReference type="PhosphoSitePlus" id="P55160"/>
<dbReference type="BioMuta" id="NCKAP1L"/>
<dbReference type="DMDM" id="218512111"/>
<dbReference type="jPOST" id="P55160"/>
<dbReference type="MassIVE" id="P55160"/>
<dbReference type="PaxDb" id="9606-ENSP00000293373"/>
<dbReference type="PeptideAtlas" id="P55160"/>
<dbReference type="ProteomicsDB" id="5214"/>
<dbReference type="ProteomicsDB" id="56795">
    <molecule id="P55160-1"/>
</dbReference>
<dbReference type="Pumba" id="P55160"/>
<dbReference type="Antibodypedia" id="27500">
    <property type="antibodies" value="152 antibodies from 24 providers"/>
</dbReference>
<dbReference type="DNASU" id="3071"/>
<dbReference type="Ensembl" id="ENST00000293373.11">
    <molecule id="P55160-1"/>
    <property type="protein sequence ID" value="ENSP00000293373.6"/>
    <property type="gene ID" value="ENSG00000123338.13"/>
</dbReference>
<dbReference type="Ensembl" id="ENST00000545638.2">
    <molecule id="P55160-2"/>
    <property type="protein sequence ID" value="ENSP00000445596.2"/>
    <property type="gene ID" value="ENSG00000123338.13"/>
</dbReference>
<dbReference type="GeneID" id="3071"/>
<dbReference type="KEGG" id="hsa:3071"/>
<dbReference type="MANE-Select" id="ENST00000293373.11">
    <property type="protein sequence ID" value="ENSP00000293373.6"/>
    <property type="RefSeq nucleotide sequence ID" value="NM_005337.5"/>
    <property type="RefSeq protein sequence ID" value="NP_005328.2"/>
</dbReference>
<dbReference type="UCSC" id="uc001sgc.5">
    <molecule id="P55160-1"/>
    <property type="organism name" value="human"/>
</dbReference>
<dbReference type="AGR" id="HGNC:4862"/>
<dbReference type="CTD" id="3071"/>
<dbReference type="DisGeNET" id="3071"/>
<dbReference type="GeneCards" id="NCKAP1L"/>
<dbReference type="HGNC" id="HGNC:4862">
    <property type="gene designation" value="NCKAP1L"/>
</dbReference>
<dbReference type="HPA" id="ENSG00000123338">
    <property type="expression patterns" value="Tissue enhanced (lymphoid)"/>
</dbReference>
<dbReference type="MalaCards" id="NCKAP1L"/>
<dbReference type="MIM" id="141180">
    <property type="type" value="gene"/>
</dbReference>
<dbReference type="MIM" id="618982">
    <property type="type" value="phenotype"/>
</dbReference>
<dbReference type="neXtProt" id="NX_P55160"/>
<dbReference type="OpenTargets" id="ENSG00000123338"/>
<dbReference type="Orphanet" id="619953">
    <property type="disease" value="Familial hyperinflammatory lymphoproliferative immunodeficiency"/>
</dbReference>
<dbReference type="PharmGKB" id="PA29239"/>
<dbReference type="VEuPathDB" id="HostDB:ENSG00000123338"/>
<dbReference type="eggNOG" id="KOG1917">
    <property type="taxonomic scope" value="Eukaryota"/>
</dbReference>
<dbReference type="GeneTree" id="ENSGT00390000016619"/>
<dbReference type="HOGENOM" id="CLU_004450_0_0_1"/>
<dbReference type="InParanoid" id="P55160"/>
<dbReference type="OMA" id="LIWHVAS"/>
<dbReference type="OrthoDB" id="548214at2759"/>
<dbReference type="PAN-GO" id="P55160">
    <property type="GO annotations" value="6 GO annotations based on evolutionary models"/>
</dbReference>
<dbReference type="PhylomeDB" id="P55160"/>
<dbReference type="TreeFam" id="TF313683"/>
<dbReference type="PathwayCommons" id="P55160"/>
<dbReference type="Reactome" id="R-HSA-2029482">
    <property type="pathway name" value="Regulation of actin dynamics for phagocytic cup formation"/>
</dbReference>
<dbReference type="Reactome" id="R-HSA-4420097">
    <property type="pathway name" value="VEGFA-VEGFR2 Pathway"/>
</dbReference>
<dbReference type="Reactome" id="R-HSA-5663213">
    <property type="pathway name" value="RHO GTPases Activate WASPs and WAVEs"/>
</dbReference>
<dbReference type="Reactome" id="R-HSA-6798695">
    <property type="pathway name" value="Neutrophil degranulation"/>
</dbReference>
<dbReference type="Reactome" id="R-HSA-9013149">
    <property type="pathway name" value="RAC1 GTPase cycle"/>
</dbReference>
<dbReference type="Reactome" id="R-HSA-9013404">
    <property type="pathway name" value="RAC2 GTPase cycle"/>
</dbReference>
<dbReference type="Reactome" id="R-HSA-9013423">
    <property type="pathway name" value="RAC3 GTPase cycle"/>
</dbReference>
<dbReference type="Reactome" id="R-HSA-9664422">
    <property type="pathway name" value="FCGR3A-mediated phagocytosis"/>
</dbReference>
<dbReference type="SignaLink" id="P55160"/>
<dbReference type="BioGRID-ORCS" id="3071">
    <property type="hits" value="28 hits in 1158 CRISPR screens"/>
</dbReference>
<dbReference type="CD-CODE" id="FB4E32DD">
    <property type="entry name" value="Presynaptic clusters and postsynaptic densities"/>
</dbReference>
<dbReference type="ChiTaRS" id="NCKAP1L">
    <property type="organism name" value="human"/>
</dbReference>
<dbReference type="GenomeRNAi" id="3071"/>
<dbReference type="Pharos" id="P55160">
    <property type="development level" value="Tbio"/>
</dbReference>
<dbReference type="PRO" id="PR:P55160"/>
<dbReference type="Proteomes" id="UP000005640">
    <property type="component" value="Chromosome 12"/>
</dbReference>
<dbReference type="RNAct" id="P55160">
    <property type="molecule type" value="protein"/>
</dbReference>
<dbReference type="Bgee" id="ENSG00000123338">
    <property type="expression patterns" value="Expressed in monocyte and 176 other cell types or tissues"/>
</dbReference>
<dbReference type="ExpressionAtlas" id="P55160">
    <property type="expression patterns" value="baseline and differential"/>
</dbReference>
<dbReference type="GO" id="GO:0005829">
    <property type="term" value="C:cytosol"/>
    <property type="evidence" value="ECO:0000314"/>
    <property type="project" value="HPA"/>
</dbReference>
<dbReference type="GO" id="GO:0070062">
    <property type="term" value="C:extracellular exosome"/>
    <property type="evidence" value="ECO:0007005"/>
    <property type="project" value="UniProtKB"/>
</dbReference>
<dbReference type="GO" id="GO:0101003">
    <property type="term" value="C:ficolin-1-rich granule membrane"/>
    <property type="evidence" value="ECO:0000304"/>
    <property type="project" value="Reactome"/>
</dbReference>
<dbReference type="GO" id="GO:0016020">
    <property type="term" value="C:membrane"/>
    <property type="evidence" value="ECO:0007005"/>
    <property type="project" value="UniProtKB"/>
</dbReference>
<dbReference type="GO" id="GO:0005886">
    <property type="term" value="C:plasma membrane"/>
    <property type="evidence" value="ECO:0000314"/>
    <property type="project" value="HPA"/>
</dbReference>
<dbReference type="GO" id="GO:0031209">
    <property type="term" value="C:SCAR complex"/>
    <property type="evidence" value="ECO:0000314"/>
    <property type="project" value="UniProtKB"/>
</dbReference>
<dbReference type="GO" id="GO:0030667">
    <property type="term" value="C:secretory granule membrane"/>
    <property type="evidence" value="ECO:0000304"/>
    <property type="project" value="Reactome"/>
</dbReference>
<dbReference type="GO" id="GO:0005096">
    <property type="term" value="F:GTPase activator activity"/>
    <property type="evidence" value="ECO:0000315"/>
    <property type="project" value="UniProtKB"/>
</dbReference>
<dbReference type="GO" id="GO:0030295">
    <property type="term" value="F:protein kinase activator activity"/>
    <property type="evidence" value="ECO:0000315"/>
    <property type="project" value="UniProtKB"/>
</dbReference>
<dbReference type="GO" id="GO:0044877">
    <property type="term" value="F:protein-containing complex binding"/>
    <property type="evidence" value="ECO:0000314"/>
    <property type="project" value="UniProtKB"/>
</dbReference>
<dbReference type="GO" id="GO:1904841">
    <property type="term" value="F:TORC2 complex binding"/>
    <property type="evidence" value="ECO:0000314"/>
    <property type="project" value="UniProtKB"/>
</dbReference>
<dbReference type="GO" id="GO:0070358">
    <property type="term" value="P:actin polymerization-dependent cell motility"/>
    <property type="evidence" value="ECO:0000315"/>
    <property type="project" value="UniProtKB"/>
</dbReference>
<dbReference type="GO" id="GO:0001782">
    <property type="term" value="P:B cell homeostasis"/>
    <property type="evidence" value="ECO:0000250"/>
    <property type="project" value="UniProtKB"/>
</dbReference>
<dbReference type="GO" id="GO:0050853">
    <property type="term" value="P:B cell receptor signaling pathway"/>
    <property type="evidence" value="ECO:0000315"/>
    <property type="project" value="UniProtKB"/>
</dbReference>
<dbReference type="GO" id="GO:0016477">
    <property type="term" value="P:cell migration"/>
    <property type="evidence" value="ECO:0000318"/>
    <property type="project" value="GO_Central"/>
</dbReference>
<dbReference type="GO" id="GO:0000902">
    <property type="term" value="P:cell morphogenesis"/>
    <property type="evidence" value="ECO:0000318"/>
    <property type="project" value="GO_Central"/>
</dbReference>
<dbReference type="GO" id="GO:0030031">
    <property type="term" value="P:cell projection assembly"/>
    <property type="evidence" value="ECO:0000318"/>
    <property type="project" value="GO_Central"/>
</dbReference>
<dbReference type="GO" id="GO:0006935">
    <property type="term" value="P:chemotaxis"/>
    <property type="evidence" value="ECO:0000314"/>
    <property type="project" value="UniProtKB"/>
</dbReference>
<dbReference type="GO" id="GO:0030866">
    <property type="term" value="P:cortical actin cytoskeleton organization"/>
    <property type="evidence" value="ECO:0000315"/>
    <property type="project" value="UniProtKB"/>
</dbReference>
<dbReference type="GO" id="GO:0048821">
    <property type="term" value="P:erythrocyte development"/>
    <property type="evidence" value="ECO:0000270"/>
    <property type="project" value="UniProtKB"/>
</dbReference>
<dbReference type="GO" id="GO:0034101">
    <property type="term" value="P:erythrocyte homeostasis"/>
    <property type="evidence" value="ECO:0000250"/>
    <property type="project" value="UniProtKB"/>
</dbReference>
<dbReference type="GO" id="GO:0035556">
    <property type="term" value="P:intracellular signal transduction"/>
    <property type="evidence" value="ECO:0000315"/>
    <property type="project" value="UniProtKB"/>
</dbReference>
<dbReference type="GO" id="GO:0030011">
    <property type="term" value="P:maintenance of cell polarity"/>
    <property type="evidence" value="ECO:0000315"/>
    <property type="project" value="UniProtKB"/>
</dbReference>
<dbReference type="GO" id="GO:0002262">
    <property type="term" value="P:myeloid cell homeostasis"/>
    <property type="evidence" value="ECO:0000250"/>
    <property type="project" value="UniProtKB"/>
</dbReference>
<dbReference type="GO" id="GO:0043066">
    <property type="term" value="P:negative regulation of apoptotic process"/>
    <property type="evidence" value="ECO:0000315"/>
    <property type="project" value="UniProtKB"/>
</dbReference>
<dbReference type="GO" id="GO:0043318">
    <property type="term" value="P:negative regulation of cytotoxic T cell degranulation"/>
    <property type="evidence" value="ECO:0000315"/>
    <property type="project" value="UniProtKB"/>
</dbReference>
<dbReference type="GO" id="GO:0032700">
    <property type="term" value="P:negative regulation of interleukin-17 production"/>
    <property type="evidence" value="ECO:0000250"/>
    <property type="project" value="UniProtKB"/>
</dbReference>
<dbReference type="GO" id="GO:0032715">
    <property type="term" value="P:negative regulation of interleukin-6 production"/>
    <property type="evidence" value="ECO:0000250"/>
    <property type="project" value="UniProtKB"/>
</dbReference>
<dbReference type="GO" id="GO:0048812">
    <property type="term" value="P:neuron projection morphogenesis"/>
    <property type="evidence" value="ECO:0000318"/>
    <property type="project" value="GO_Central"/>
</dbReference>
<dbReference type="GO" id="GO:0030838">
    <property type="term" value="P:positive regulation of actin filament polymerization"/>
    <property type="evidence" value="ECO:0000315"/>
    <property type="project" value="UniProtKB"/>
</dbReference>
<dbReference type="GO" id="GO:0045579">
    <property type="term" value="P:positive regulation of B cell differentiation"/>
    <property type="evidence" value="ECO:0000250"/>
    <property type="project" value="UniProtKB"/>
</dbReference>
<dbReference type="GO" id="GO:0030890">
    <property type="term" value="P:positive regulation of B cell proliferation"/>
    <property type="evidence" value="ECO:0000315"/>
    <property type="project" value="UniProtKB"/>
</dbReference>
<dbReference type="GO" id="GO:0043372">
    <property type="term" value="P:positive regulation of CD4-positive, alpha-beta T cell differentiation"/>
    <property type="evidence" value="ECO:0000250"/>
    <property type="project" value="UniProtKB"/>
</dbReference>
<dbReference type="GO" id="GO:0043378">
    <property type="term" value="P:positive regulation of CD8-positive, alpha-beta T cell differentiation"/>
    <property type="evidence" value="ECO:0000250"/>
    <property type="project" value="UniProtKB"/>
</dbReference>
<dbReference type="GO" id="GO:0033630">
    <property type="term" value="P:positive regulation of cell adhesion mediated by integrin"/>
    <property type="evidence" value="ECO:0000250"/>
    <property type="project" value="UniProtKB"/>
</dbReference>
<dbReference type="GO" id="GO:0045648">
    <property type="term" value="P:positive regulation of erythrocyte differentiation"/>
    <property type="evidence" value="ECO:0000250"/>
    <property type="project" value="UniProtKB"/>
</dbReference>
<dbReference type="GO" id="GO:0045588">
    <property type="term" value="P:positive regulation of gamma-delta T cell differentiation"/>
    <property type="evidence" value="ECO:0000250"/>
    <property type="project" value="UniProtKB"/>
</dbReference>
<dbReference type="GO" id="GO:0002687">
    <property type="term" value="P:positive regulation of leukocyte migration"/>
    <property type="evidence" value="ECO:0000315"/>
    <property type="project" value="UniProtKB"/>
</dbReference>
<dbReference type="GO" id="GO:0045621">
    <property type="term" value="P:positive regulation of lymphocyte differentiation"/>
    <property type="evidence" value="ECO:0000250"/>
    <property type="project" value="UniProtKB"/>
</dbReference>
<dbReference type="GO" id="GO:0090023">
    <property type="term" value="P:positive regulation of neutrophil chemotaxis"/>
    <property type="evidence" value="ECO:0000250"/>
    <property type="project" value="UniProtKB"/>
</dbReference>
<dbReference type="GO" id="GO:1902624">
    <property type="term" value="P:positive regulation of neutrophil migration"/>
    <property type="evidence" value="ECO:0000315"/>
    <property type="project" value="UniProtKB"/>
</dbReference>
<dbReference type="GO" id="GO:0060100">
    <property type="term" value="P:positive regulation of phagocytosis, engulfment"/>
    <property type="evidence" value="ECO:0000250"/>
    <property type="project" value="UniProtKB"/>
</dbReference>
<dbReference type="GO" id="GO:0042102">
    <property type="term" value="P:positive regulation of T cell proliferation"/>
    <property type="evidence" value="ECO:0000315"/>
    <property type="project" value="UniProtKB"/>
</dbReference>
<dbReference type="GO" id="GO:1904515">
    <property type="term" value="P:positive regulation of TORC2 signaling"/>
    <property type="evidence" value="ECO:0000315"/>
    <property type="project" value="UniProtKB"/>
</dbReference>
<dbReference type="GO" id="GO:0065003">
    <property type="term" value="P:protein-containing complex assembly"/>
    <property type="evidence" value="ECO:0000250"/>
    <property type="project" value="UniProtKB"/>
</dbReference>
<dbReference type="GO" id="GO:0009410">
    <property type="term" value="P:response to xenobiotic stimulus"/>
    <property type="evidence" value="ECO:0000315"/>
    <property type="project" value="UniProtKB"/>
</dbReference>
<dbReference type="GO" id="GO:0043029">
    <property type="term" value="P:T cell homeostasis"/>
    <property type="evidence" value="ECO:0000250"/>
    <property type="project" value="UniProtKB"/>
</dbReference>
<dbReference type="InterPro" id="IPR019137">
    <property type="entry name" value="Nck-associated_protein-1"/>
</dbReference>
<dbReference type="PANTHER" id="PTHR12093">
    <property type="entry name" value="NCK-ASSOCIATED PROTEIN 1"/>
    <property type="match status" value="1"/>
</dbReference>
<dbReference type="PANTHER" id="PTHR12093:SF9">
    <property type="entry name" value="NCK-ASSOCIATED PROTEIN 1-LIKE"/>
    <property type="match status" value="1"/>
</dbReference>
<dbReference type="Pfam" id="PF09735">
    <property type="entry name" value="Nckap1"/>
    <property type="match status" value="1"/>
</dbReference>
<organism>
    <name type="scientific">Homo sapiens</name>
    <name type="common">Human</name>
    <dbReference type="NCBI Taxonomy" id="9606"/>
    <lineage>
        <taxon>Eukaryota</taxon>
        <taxon>Metazoa</taxon>
        <taxon>Chordata</taxon>
        <taxon>Craniata</taxon>
        <taxon>Vertebrata</taxon>
        <taxon>Euteleostomi</taxon>
        <taxon>Mammalia</taxon>
        <taxon>Eutheria</taxon>
        <taxon>Euarchontoglires</taxon>
        <taxon>Primates</taxon>
        <taxon>Haplorrhini</taxon>
        <taxon>Catarrhini</taxon>
        <taxon>Hominidae</taxon>
        <taxon>Homo</taxon>
    </lineage>
</organism>
<sequence length="1127" mass="128153">MSLTSAYQHKLAEKLTILNDRGQGVLIRMYNIKKTCSDPKSKPPFLLEKSMEPSLKYINKKFPNIDVRNSTQHLGPVHREKAEIIRFLTNYYQSFVDVMEFRDHVYELLNTIDACQCHFDINLNFDFTRSYLDLIVTYTSVILLLSRIEDRRILIGMYNCAHEMLHGHGDPSFARLGQMVLEYDHPLKKLTEEFGPHTKAVSGALLSLHFLFVRRNQGAEQWRSAQLLSLISNPPAMINPANSDTMACEYLSVEVMERWIIIGFLLCHGCLNSNSQCQKLWKLCLQGSLYITLIREDVLQVHKVTEDLFSSLKGYGKRVADIKESKEHVIANSGQFHCQRRQFLRMAVKELETVLADEPGLLGPKALFAFMALSFIRDEVTWLVRHTENVTKTKTPEDYADSSIAELLFLLEGIRSLVRRHIKVIQQYHLQYLARFDALVLSDIIQNLSVCPEEESIIMSSFVSILSSLNLKQVDNGEKFEFSGLRLDWFRLQAYTSVAKAPLHLHENPDLAKVMNLIVFHSRMLDSVEKLLVETSDLSTFCFHLRIFEKMFAMTLEESAMLRYAIAFPLICAHFVHCTHEMCPEEYPHLKNHGLHHCNSFLEELAKQTSNCVLEICAEQRNLSEQLLPKHCATTISKAKNKKTRKQRQTPRKGEPERDKPGAESHRKNRSIVTNMDKLHLNLTELALTMNHVYSFSVFEHTIFPSEYLSSHLEARLNRAIVWLAGYNATTQEIVRPSELLAGVKAYIGFIQSLAQFLGADASRVIRNALLQQTQPLDSCGEQTITTLYTNWYLESLLRQASSGTIILSPAMQAFVSLPREGEQNFSAEEFSDISEMRALAELLGPYGMKFLSENLMWHVTSQIVELKKLVVENMDILVQIRSNFSKPDLMASLLPQLTGAENVLKRMTIIGVILSFRAMAQEGLREVFSSHCPFLMGPIECLKEFVTPDTDIKVTLSIFELASAAGVGCDIDPALVAAIANLKADTSSPEEEYKVACLLLIFLAVSLPLLATDPSSFYSIEKDGYNNNIHCLTKAIIQVSAALFTLYNKNIETHLKEFLVVASVSLLQLGQETDKLKTRNRESISLLMRLVVEESSFLTLDMLESCFPYVLLRNAYREVSRAFHLN</sequence>
<name>NCKPL_HUMAN</name>
<gene>
    <name evidence="13" type="primary">NCKAP1L</name>
    <name evidence="13" type="synonym">HEM1</name>
</gene>
<protein>
    <recommendedName>
        <fullName evidence="12">Nck-associated protein 1-like</fullName>
    </recommendedName>
    <alternativeName>
        <fullName evidence="10">Hematopoietic protein 1</fullName>
    </alternativeName>
    <alternativeName>
        <fullName>Membrane-associated protein HEM-1</fullName>
    </alternativeName>
</protein>
<accession>P55160</accession>
<accession>B4DUT5</accession>
<accession>Q52LW0</accession>
<feature type="chain" id="PRO_0000216175" description="Nck-associated protein 1-like">
    <location>
        <begin position="1"/>
        <end position="1127"/>
    </location>
</feature>
<feature type="transmembrane region" description="Helical" evidence="2">
    <location>
        <begin position="996"/>
        <end position="1016"/>
    </location>
</feature>
<feature type="region of interest" description="Disordered" evidence="3">
    <location>
        <begin position="638"/>
        <end position="670"/>
    </location>
</feature>
<feature type="compositionally biased region" description="Basic residues" evidence="3">
    <location>
        <begin position="639"/>
        <end position="651"/>
    </location>
</feature>
<feature type="compositionally biased region" description="Basic and acidic residues" evidence="3">
    <location>
        <begin position="652"/>
        <end position="666"/>
    </location>
</feature>
<feature type="splice variant" id="VSP_045191" description="In isoform 2." evidence="9">
    <location>
        <begin position="1"/>
        <end position="50"/>
    </location>
</feature>
<feature type="sequence variant" id="VAR_084644" description="In IMD72; loss of function; decreased protein levels in T-cells; T-cells display excessive degranulation and granule release; dbSNP:rs1956891911." evidence="7">
    <original>R</original>
    <variation>L</variation>
    <location>
        <position position="258"/>
    </location>
</feature>
<feature type="sequence variant" id="VAR_084645" description="In IMD72; loss of function; decreased protein levels in T-cells; decreased interaction with WASF2 and poor formation of WAVE2 complex; T-cells display excessive degranulation and granule release; cells exhibit reduced cortical F-actin and aberrant membrane spikes and WAS-mediated puncta, defective cell spreading and lamellipodia and reduced migratory velocity, as well as abnormal activation, blunted proliferation, decreased IL2 and TNF production and defective TCR-induced phosphorylation of mTORC2 complex substrate AKT; homozygous patient neutrophils migrating in chemokine gradients exhibit reduced velocity and directional persistence, unusual elongation and misdirected competing leading edges; no effect on interaction with RICTOR; dbSNP:rs770633648." evidence="7">
    <original>P</original>
    <variation>L</variation>
    <location>
        <position position="359"/>
    </location>
</feature>
<feature type="sequence variant" id="VAR_084646" description="In IMD72; loss of function; T-cells display excessive degranulation and granule release; no effect on protein levels in T-cells, nor on interaction with WASF2; when tested in a heterologous system, formed WAVE complexes that poorly interact with ARF1 and could not promote F-actin polymerization upon stimulation with an ARF1-RAC1 dimer; no effect on interaction with RICTOR; dbSNP:rs750982844." evidence="7">
    <original>M</original>
    <variation>V</variation>
    <location>
        <position position="371"/>
    </location>
</feature>
<feature type="sequence variant" id="VAR_059316" description="In dbSNP:rs7311877.">
    <original>T</original>
    <variation>A</variation>
    <location>
        <position position="391"/>
    </location>
</feature>
<feature type="sequence variant" id="VAR_049344" description="In dbSNP:rs2270581.">
    <original>S</original>
    <variation>L</variation>
    <location>
        <position position="402"/>
    </location>
</feature>
<feature type="sequence variant" id="VAR_084647" description="In IMD72; loss of function; decreased protein levels in T-cells; decreased interaction with WASF2 and poor formation of WAVE2 complex; dbSNP:rs1956961224." evidence="7">
    <original>V</original>
    <variation>L</variation>
    <location>
        <position position="519"/>
    </location>
</feature>
<feature type="sequence conflict" description="In Ref. 2; AAA35964." evidence="12" ref="2">
    <original>T</original>
    <variation>H</variation>
    <location>
        <position position="496"/>
    </location>
</feature>
<feature type="sequence conflict" description="In Ref. 2; AAA35964." evidence="12" ref="2">
    <original>NA</original>
    <variation>KP</variation>
    <location>
        <begin position="768"/>
        <end position="769"/>
    </location>
</feature>
<feature type="sequence conflict" description="In Ref. 2; AAA35964." evidence="12" ref="2">
    <original>L</original>
    <variation>V</variation>
    <location>
        <position position="1060"/>
    </location>
</feature>
<reference key="1">
    <citation type="journal article" date="1991" name="Biochim. Biophys. Acta">
        <title>Hem-1, a potential membrane protein, with expression restricted to blood cells.</title>
        <authorList>
            <person name="Hromas R."/>
            <person name="Collins S."/>
            <person name="Raskind W."/>
            <person name="Deaven L."/>
            <person name="Kaushansky K."/>
        </authorList>
    </citation>
    <scope>NUCLEOTIDE SEQUENCE [MRNA] (ISOFORM 1)</scope>
    <scope>TISSUE SPECIFICITY</scope>
</reference>
<reference key="2">
    <citation type="journal article" date="1995" name="J. Mol. Biol.">
        <title>The HEM proteins: a novel family of tissue-specific transmembrane proteins expressed from invertebrates through mammals with an essential function in oogenesis.</title>
        <authorList>
            <person name="Baumgartner S."/>
            <person name="Martin D."/>
            <person name="Chiquet-Ehrismann R."/>
            <person name="Sutton J."/>
            <person name="Desai A."/>
            <person name="Huang I."/>
            <person name="Kato K."/>
            <person name="Hromas R."/>
        </authorList>
    </citation>
    <scope>NUCLEOTIDE SEQUENCE [MRNA] (ISOFORM 1)</scope>
    <scope>TISSUE SPECIFICITY</scope>
    <source>
        <tissue>Blood</tissue>
    </source>
</reference>
<reference key="3">
    <citation type="journal article" date="2004" name="Nat. Genet.">
        <title>Complete sequencing and characterization of 21,243 full-length human cDNAs.</title>
        <authorList>
            <person name="Ota T."/>
            <person name="Suzuki Y."/>
            <person name="Nishikawa T."/>
            <person name="Otsuki T."/>
            <person name="Sugiyama T."/>
            <person name="Irie R."/>
            <person name="Wakamatsu A."/>
            <person name="Hayashi K."/>
            <person name="Sato H."/>
            <person name="Nagai K."/>
            <person name="Kimura K."/>
            <person name="Makita H."/>
            <person name="Sekine M."/>
            <person name="Obayashi M."/>
            <person name="Nishi T."/>
            <person name="Shibahara T."/>
            <person name="Tanaka T."/>
            <person name="Ishii S."/>
            <person name="Yamamoto J."/>
            <person name="Saito K."/>
            <person name="Kawai Y."/>
            <person name="Isono Y."/>
            <person name="Nakamura Y."/>
            <person name="Nagahari K."/>
            <person name="Murakami K."/>
            <person name="Yasuda T."/>
            <person name="Iwayanagi T."/>
            <person name="Wagatsuma M."/>
            <person name="Shiratori A."/>
            <person name="Sudo H."/>
            <person name="Hosoiri T."/>
            <person name="Kaku Y."/>
            <person name="Kodaira H."/>
            <person name="Kondo H."/>
            <person name="Sugawara M."/>
            <person name="Takahashi M."/>
            <person name="Kanda K."/>
            <person name="Yokoi T."/>
            <person name="Furuya T."/>
            <person name="Kikkawa E."/>
            <person name="Omura Y."/>
            <person name="Abe K."/>
            <person name="Kamihara K."/>
            <person name="Katsuta N."/>
            <person name="Sato K."/>
            <person name="Tanikawa M."/>
            <person name="Yamazaki M."/>
            <person name="Ninomiya K."/>
            <person name="Ishibashi T."/>
            <person name="Yamashita H."/>
            <person name="Murakawa K."/>
            <person name="Fujimori K."/>
            <person name="Tanai H."/>
            <person name="Kimata M."/>
            <person name="Watanabe M."/>
            <person name="Hiraoka S."/>
            <person name="Chiba Y."/>
            <person name="Ishida S."/>
            <person name="Ono Y."/>
            <person name="Takiguchi S."/>
            <person name="Watanabe S."/>
            <person name="Yosida M."/>
            <person name="Hotuta T."/>
            <person name="Kusano J."/>
            <person name="Kanehori K."/>
            <person name="Takahashi-Fujii A."/>
            <person name="Hara H."/>
            <person name="Tanase T.-O."/>
            <person name="Nomura Y."/>
            <person name="Togiya S."/>
            <person name="Komai F."/>
            <person name="Hara R."/>
            <person name="Takeuchi K."/>
            <person name="Arita M."/>
            <person name="Imose N."/>
            <person name="Musashino K."/>
            <person name="Yuuki H."/>
            <person name="Oshima A."/>
            <person name="Sasaki N."/>
            <person name="Aotsuka S."/>
            <person name="Yoshikawa Y."/>
            <person name="Matsunawa H."/>
            <person name="Ichihara T."/>
            <person name="Shiohata N."/>
            <person name="Sano S."/>
            <person name="Moriya S."/>
            <person name="Momiyama H."/>
            <person name="Satoh N."/>
            <person name="Takami S."/>
            <person name="Terashima Y."/>
            <person name="Suzuki O."/>
            <person name="Nakagawa S."/>
            <person name="Senoh A."/>
            <person name="Mizoguchi H."/>
            <person name="Goto Y."/>
            <person name="Shimizu F."/>
            <person name="Wakebe H."/>
            <person name="Hishigaki H."/>
            <person name="Watanabe T."/>
            <person name="Sugiyama A."/>
            <person name="Takemoto M."/>
            <person name="Kawakami B."/>
            <person name="Yamazaki M."/>
            <person name="Watanabe K."/>
            <person name="Kumagai A."/>
            <person name="Itakura S."/>
            <person name="Fukuzumi Y."/>
            <person name="Fujimori Y."/>
            <person name="Komiyama M."/>
            <person name="Tashiro H."/>
            <person name="Tanigami A."/>
            <person name="Fujiwara T."/>
            <person name="Ono T."/>
            <person name="Yamada K."/>
            <person name="Fujii Y."/>
            <person name="Ozaki K."/>
            <person name="Hirao M."/>
            <person name="Ohmori Y."/>
            <person name="Kawabata A."/>
            <person name="Hikiji T."/>
            <person name="Kobatake N."/>
            <person name="Inagaki H."/>
            <person name="Ikema Y."/>
            <person name="Okamoto S."/>
            <person name="Okitani R."/>
            <person name="Kawakami T."/>
            <person name="Noguchi S."/>
            <person name="Itoh T."/>
            <person name="Shigeta K."/>
            <person name="Senba T."/>
            <person name="Matsumura K."/>
            <person name="Nakajima Y."/>
            <person name="Mizuno T."/>
            <person name="Morinaga M."/>
            <person name="Sasaki M."/>
            <person name="Togashi T."/>
            <person name="Oyama M."/>
            <person name="Hata H."/>
            <person name="Watanabe M."/>
            <person name="Komatsu T."/>
            <person name="Mizushima-Sugano J."/>
            <person name="Satoh T."/>
            <person name="Shirai Y."/>
            <person name="Takahashi Y."/>
            <person name="Nakagawa K."/>
            <person name="Okumura K."/>
            <person name="Nagase T."/>
            <person name="Nomura N."/>
            <person name="Kikuchi H."/>
            <person name="Masuho Y."/>
            <person name="Yamashita R."/>
            <person name="Nakai K."/>
            <person name="Yada T."/>
            <person name="Nakamura Y."/>
            <person name="Ohara O."/>
            <person name="Isogai T."/>
            <person name="Sugano S."/>
        </authorList>
    </citation>
    <scope>NUCLEOTIDE SEQUENCE [LARGE SCALE MRNA] (ISOFORM 2)</scope>
</reference>
<reference key="4">
    <citation type="journal article" date="2006" name="Nature">
        <title>The finished DNA sequence of human chromosome 12.</title>
        <authorList>
            <person name="Scherer S.E."/>
            <person name="Muzny D.M."/>
            <person name="Buhay C.J."/>
            <person name="Chen R."/>
            <person name="Cree A."/>
            <person name="Ding Y."/>
            <person name="Dugan-Rocha S."/>
            <person name="Gill R."/>
            <person name="Gunaratne P."/>
            <person name="Harris R.A."/>
            <person name="Hawes A.C."/>
            <person name="Hernandez J."/>
            <person name="Hodgson A.V."/>
            <person name="Hume J."/>
            <person name="Jackson A."/>
            <person name="Khan Z.M."/>
            <person name="Kovar-Smith C."/>
            <person name="Lewis L.R."/>
            <person name="Lozado R.J."/>
            <person name="Metzker M.L."/>
            <person name="Milosavljevic A."/>
            <person name="Miner G.R."/>
            <person name="Montgomery K.T."/>
            <person name="Morgan M.B."/>
            <person name="Nazareth L.V."/>
            <person name="Scott G."/>
            <person name="Sodergren E."/>
            <person name="Song X.-Z."/>
            <person name="Steffen D."/>
            <person name="Lovering R.C."/>
            <person name="Wheeler D.A."/>
            <person name="Worley K.C."/>
            <person name="Yuan Y."/>
            <person name="Zhang Z."/>
            <person name="Adams C.Q."/>
            <person name="Ansari-Lari M.A."/>
            <person name="Ayele M."/>
            <person name="Brown M.J."/>
            <person name="Chen G."/>
            <person name="Chen Z."/>
            <person name="Clerc-Blankenburg K.P."/>
            <person name="Davis C."/>
            <person name="Delgado O."/>
            <person name="Dinh H.H."/>
            <person name="Draper H."/>
            <person name="Gonzalez-Garay M.L."/>
            <person name="Havlak P."/>
            <person name="Jackson L.R."/>
            <person name="Jacob L.S."/>
            <person name="Kelly S.H."/>
            <person name="Li L."/>
            <person name="Li Z."/>
            <person name="Liu J."/>
            <person name="Liu W."/>
            <person name="Lu J."/>
            <person name="Maheshwari M."/>
            <person name="Nguyen B.-V."/>
            <person name="Okwuonu G.O."/>
            <person name="Pasternak S."/>
            <person name="Perez L.M."/>
            <person name="Plopper F.J.H."/>
            <person name="Santibanez J."/>
            <person name="Shen H."/>
            <person name="Tabor P.E."/>
            <person name="Verduzco D."/>
            <person name="Waldron L."/>
            <person name="Wang Q."/>
            <person name="Williams G.A."/>
            <person name="Zhang J."/>
            <person name="Zhou J."/>
            <person name="Allen C.C."/>
            <person name="Amin A.G."/>
            <person name="Anyalebechi V."/>
            <person name="Bailey M."/>
            <person name="Barbaria J.A."/>
            <person name="Bimage K.E."/>
            <person name="Bryant N.P."/>
            <person name="Burch P.E."/>
            <person name="Burkett C.E."/>
            <person name="Burrell K.L."/>
            <person name="Calderon E."/>
            <person name="Cardenas V."/>
            <person name="Carter K."/>
            <person name="Casias K."/>
            <person name="Cavazos I."/>
            <person name="Cavazos S.R."/>
            <person name="Ceasar H."/>
            <person name="Chacko J."/>
            <person name="Chan S.N."/>
            <person name="Chavez D."/>
            <person name="Christopoulos C."/>
            <person name="Chu J."/>
            <person name="Cockrell R."/>
            <person name="Cox C.D."/>
            <person name="Dang M."/>
            <person name="Dathorne S.R."/>
            <person name="David R."/>
            <person name="Davis C.M."/>
            <person name="Davy-Carroll L."/>
            <person name="Deshazo D.R."/>
            <person name="Donlin J.E."/>
            <person name="D'Souza L."/>
            <person name="Eaves K.A."/>
            <person name="Egan A."/>
            <person name="Emery-Cohen A.J."/>
            <person name="Escotto M."/>
            <person name="Flagg N."/>
            <person name="Forbes L.D."/>
            <person name="Gabisi A.M."/>
            <person name="Garza M."/>
            <person name="Hamilton C."/>
            <person name="Henderson N."/>
            <person name="Hernandez O."/>
            <person name="Hines S."/>
            <person name="Hogues M.E."/>
            <person name="Huang M."/>
            <person name="Idlebird D.G."/>
            <person name="Johnson R."/>
            <person name="Jolivet A."/>
            <person name="Jones S."/>
            <person name="Kagan R."/>
            <person name="King L.M."/>
            <person name="Leal B."/>
            <person name="Lebow H."/>
            <person name="Lee S."/>
            <person name="LeVan J.M."/>
            <person name="Lewis L.C."/>
            <person name="London P."/>
            <person name="Lorensuhewa L.M."/>
            <person name="Loulseged H."/>
            <person name="Lovett D.A."/>
            <person name="Lucier A."/>
            <person name="Lucier R.L."/>
            <person name="Ma J."/>
            <person name="Madu R.C."/>
            <person name="Mapua P."/>
            <person name="Martindale A.D."/>
            <person name="Martinez E."/>
            <person name="Massey E."/>
            <person name="Mawhiney S."/>
            <person name="Meador M.G."/>
            <person name="Mendez S."/>
            <person name="Mercado C."/>
            <person name="Mercado I.C."/>
            <person name="Merritt C.E."/>
            <person name="Miner Z.L."/>
            <person name="Minja E."/>
            <person name="Mitchell T."/>
            <person name="Mohabbat F."/>
            <person name="Mohabbat K."/>
            <person name="Montgomery B."/>
            <person name="Moore N."/>
            <person name="Morris S."/>
            <person name="Munidasa M."/>
            <person name="Ngo R.N."/>
            <person name="Nguyen N.B."/>
            <person name="Nickerson E."/>
            <person name="Nwaokelemeh O.O."/>
            <person name="Nwokenkwo S."/>
            <person name="Obregon M."/>
            <person name="Oguh M."/>
            <person name="Oragunye N."/>
            <person name="Oviedo R.J."/>
            <person name="Parish B.J."/>
            <person name="Parker D.N."/>
            <person name="Parrish J."/>
            <person name="Parks K.L."/>
            <person name="Paul H.A."/>
            <person name="Payton B.A."/>
            <person name="Perez A."/>
            <person name="Perrin W."/>
            <person name="Pickens A."/>
            <person name="Primus E.L."/>
            <person name="Pu L.-L."/>
            <person name="Puazo M."/>
            <person name="Quiles M.M."/>
            <person name="Quiroz J.B."/>
            <person name="Rabata D."/>
            <person name="Reeves K."/>
            <person name="Ruiz S.J."/>
            <person name="Shao H."/>
            <person name="Sisson I."/>
            <person name="Sonaike T."/>
            <person name="Sorelle R.P."/>
            <person name="Sutton A.E."/>
            <person name="Svatek A.F."/>
            <person name="Svetz L.A."/>
            <person name="Tamerisa K.S."/>
            <person name="Taylor T.R."/>
            <person name="Teague B."/>
            <person name="Thomas N."/>
            <person name="Thorn R.D."/>
            <person name="Trejos Z.Y."/>
            <person name="Trevino B.K."/>
            <person name="Ukegbu O.N."/>
            <person name="Urban J.B."/>
            <person name="Vasquez L.I."/>
            <person name="Vera V.A."/>
            <person name="Villasana D.M."/>
            <person name="Wang L."/>
            <person name="Ward-Moore S."/>
            <person name="Warren J.T."/>
            <person name="Wei X."/>
            <person name="White F."/>
            <person name="Williamson A.L."/>
            <person name="Wleczyk R."/>
            <person name="Wooden H.S."/>
            <person name="Wooden S.H."/>
            <person name="Yen J."/>
            <person name="Yoon L."/>
            <person name="Yoon V."/>
            <person name="Zorrilla S.E."/>
            <person name="Nelson D."/>
            <person name="Kucherlapati R."/>
            <person name="Weinstock G."/>
            <person name="Gibbs R.A."/>
        </authorList>
    </citation>
    <scope>NUCLEOTIDE SEQUENCE [LARGE SCALE GENOMIC DNA]</scope>
</reference>
<reference key="5">
    <citation type="submission" date="2005-07" db="EMBL/GenBank/DDBJ databases">
        <authorList>
            <person name="Mural R.J."/>
            <person name="Istrail S."/>
            <person name="Sutton G.G."/>
            <person name="Florea L."/>
            <person name="Halpern A.L."/>
            <person name="Mobarry C.M."/>
            <person name="Lippert R."/>
            <person name="Walenz B."/>
            <person name="Shatkay H."/>
            <person name="Dew I."/>
            <person name="Miller J.R."/>
            <person name="Flanigan M.J."/>
            <person name="Edwards N.J."/>
            <person name="Bolanos R."/>
            <person name="Fasulo D."/>
            <person name="Halldorsson B.V."/>
            <person name="Hannenhalli S."/>
            <person name="Turner R."/>
            <person name="Yooseph S."/>
            <person name="Lu F."/>
            <person name="Nusskern D.R."/>
            <person name="Shue B.C."/>
            <person name="Zheng X.H."/>
            <person name="Zhong F."/>
            <person name="Delcher A.L."/>
            <person name="Huson D.H."/>
            <person name="Kravitz S.A."/>
            <person name="Mouchard L."/>
            <person name="Reinert K."/>
            <person name="Remington K.A."/>
            <person name="Clark A.G."/>
            <person name="Waterman M.S."/>
            <person name="Eichler E.E."/>
            <person name="Adams M.D."/>
            <person name="Hunkapiller M.W."/>
            <person name="Myers E.W."/>
            <person name="Venter J.C."/>
        </authorList>
    </citation>
    <scope>NUCLEOTIDE SEQUENCE [LARGE SCALE GENOMIC DNA]</scope>
</reference>
<reference key="6">
    <citation type="journal article" date="2004" name="Genome Res.">
        <title>The status, quality, and expansion of the NIH full-length cDNA project: the Mammalian Gene Collection (MGC).</title>
        <authorList>
            <consortium name="The MGC Project Team"/>
        </authorList>
    </citation>
    <scope>NUCLEOTIDE SEQUENCE [LARGE SCALE MRNA] (ISOFORM 1)</scope>
    <source>
        <tissue>Colon</tissue>
    </source>
</reference>
<reference key="7">
    <citation type="journal article" date="2006" name="PLoS Biol.">
        <title>Hem-1 complexes are essential for Rac activation, actin polymerization, and myosin regulation during neutrophil chemotaxis.</title>
        <authorList>
            <person name="Weiner O.D."/>
            <person name="Rentel M.C."/>
            <person name="Ott A."/>
            <person name="Brown G.E."/>
            <person name="Jedrychowski M."/>
            <person name="Yaffe M.B."/>
            <person name="Gygi S.P."/>
            <person name="Cantley L.C."/>
            <person name="Bourne H.R."/>
            <person name="Kirschner M.W."/>
        </authorList>
    </citation>
    <scope>FUNCTION</scope>
    <scope>TISSUE SPECIFICITY</scope>
    <scope>SUBCELLULAR LOCATION</scope>
    <scope>IDENTIFICATION IN THE WAVE2 COMPLEX</scope>
    <scope>INTERACTION WITH ARHGAP4; PIK3C3 AND PPP1R12A</scope>
</reference>
<reference key="8">
    <citation type="journal article" date="2007" name="PLoS Biol.">
        <title>An actin-based wave generator organizes cell motility.</title>
        <authorList>
            <person name="Weiner O.D."/>
            <person name="Marganski W.A."/>
            <person name="Wu L.F."/>
            <person name="Altschuler S.J."/>
            <person name="Kirschner M.W."/>
        </authorList>
    </citation>
    <scope>FUNCTION</scope>
    <scope>SUBCELLULAR LOCATION</scope>
</reference>
<reference key="9">
    <citation type="journal article" date="2010" name="FEBS Lett.">
        <title>Hem-1: putting the 'WAVE' into actin polymerization during an immune response.</title>
        <authorList>
            <person name="Park H."/>
            <person name="Chan M.M."/>
            <person name="Iritani B.M."/>
        </authorList>
    </citation>
    <scope>REVIEW OF FUNCTION</scope>
</reference>
<reference key="10">
    <citation type="journal article" date="2011" name="BMC Syst. Biol.">
        <title>Initial characterization of the human central proteome.</title>
        <authorList>
            <person name="Burkard T.R."/>
            <person name="Planyavsky M."/>
            <person name="Kaupe I."/>
            <person name="Breitwieser F.P."/>
            <person name="Buerckstuemmer T."/>
            <person name="Bennett K.L."/>
            <person name="Superti-Furga G."/>
            <person name="Colinge J."/>
        </authorList>
    </citation>
    <scope>IDENTIFICATION BY MASS SPECTROMETRY [LARGE SCALE ANALYSIS]</scope>
</reference>
<reference key="11">
    <citation type="journal article" date="2014" name="J. Proteomics">
        <title>An enzyme assisted RP-RPLC approach for in-depth analysis of human liver phosphoproteome.</title>
        <authorList>
            <person name="Bian Y."/>
            <person name="Song C."/>
            <person name="Cheng K."/>
            <person name="Dong M."/>
            <person name="Wang F."/>
            <person name="Huang J."/>
            <person name="Sun D."/>
            <person name="Wang L."/>
            <person name="Ye M."/>
            <person name="Zou H."/>
        </authorList>
    </citation>
    <scope>IDENTIFICATION BY MASS SPECTROMETRY [LARGE SCALE ANALYSIS]</scope>
    <source>
        <tissue>Liver</tissue>
    </source>
</reference>
<reference key="12">
    <citation type="journal article" date="2020" name="Science">
        <title>HEM1 deficiency disrupts mTORC2 and F-actin control in inherited immunodysregulatory disease.</title>
        <authorList>
            <person name="Cook S.A."/>
            <person name="Comrie W.A."/>
            <person name="Poli M.C."/>
            <person name="Similuk M."/>
            <person name="Oler A.J."/>
            <person name="Faruqi A.J."/>
            <person name="Kuhns D.B."/>
            <person name="Yang S."/>
            <person name="Vargas-Hernandez A."/>
            <person name="Carisey A.F."/>
            <person name="Fournier B."/>
            <person name="Anderson D.E."/>
            <person name="Price S."/>
            <person name="Smelkinson M."/>
            <person name="Abou Chahla W."/>
            <person name="Forbes L.R."/>
            <person name="Mace E.M."/>
            <person name="Cao T.N."/>
            <person name="Coban-Akdemir Z.H."/>
            <person name="Jhangiani S.N."/>
            <person name="Muzny D.M."/>
            <person name="Gibbs R.A."/>
            <person name="Lupski J.R."/>
            <person name="Orange J.S."/>
            <person name="Cuvelier G.D.E."/>
            <person name="Al Hassani M."/>
            <person name="Al Kaabi N."/>
            <person name="Al Yafei Z."/>
            <person name="Jyonouchi S."/>
            <person name="Raje N."/>
            <person name="Caldwell J.W."/>
            <person name="Huang Y."/>
            <person name="Burkhardt J.K."/>
            <person name="Latour S."/>
            <person name="Chen B."/>
            <person name="ElGhazali G."/>
            <person name="Rao V.K."/>
            <person name="Chinn I.K."/>
            <person name="Lenardo M.J."/>
        </authorList>
    </citation>
    <scope>INVOLVEMENT IN IMD72</scope>
    <scope>VARIANTS IMD72 LEU-258; LEU-359; VAL-371 AND LEU-519</scope>
    <scope>CHARACTERIZATION OF VARIANTS IMD72 LEU-258; LEU-359; VAL-371 AND LEU-519</scope>
    <scope>FUNCTION</scope>
    <scope>INTERACTION WITH MTOR; RICTOR AND WASF2</scope>
    <scope>TISSUE SPECIFICITY</scope>
</reference>
<keyword id="KW-0025">Alternative splicing</keyword>
<keyword id="KW-1003">Cell membrane</keyword>
<keyword id="KW-0963">Cytoplasm</keyword>
<keyword id="KW-0225">Disease variant</keyword>
<keyword id="KW-0472">Membrane</keyword>
<keyword id="KW-1267">Proteomics identification</keyword>
<keyword id="KW-1185">Reference proteome</keyword>
<keyword id="KW-0812">Transmembrane</keyword>
<keyword id="KW-1133">Transmembrane helix</keyword>
<evidence type="ECO:0000250" key="1">
    <source>
        <dbReference type="UniProtKB" id="Q8K1X4"/>
    </source>
</evidence>
<evidence type="ECO:0000255" key="2"/>
<evidence type="ECO:0000256" key="3">
    <source>
        <dbReference type="SAM" id="MobiDB-lite"/>
    </source>
</evidence>
<evidence type="ECO:0000269" key="4">
    <source>
    </source>
</evidence>
<evidence type="ECO:0000269" key="5">
    <source>
    </source>
</evidence>
<evidence type="ECO:0000269" key="6">
    <source>
    </source>
</evidence>
<evidence type="ECO:0000269" key="7">
    <source>
    </source>
</evidence>
<evidence type="ECO:0000269" key="8">
    <source>
    </source>
</evidence>
<evidence type="ECO:0000303" key="9">
    <source>
    </source>
</evidence>
<evidence type="ECO:0000303" key="10">
    <source>
    </source>
</evidence>
<evidence type="ECO:0000303" key="11">
    <source>
    </source>
</evidence>
<evidence type="ECO:0000305" key="12"/>
<evidence type="ECO:0000312" key="13">
    <source>
        <dbReference type="HGNC" id="HGNC:4862"/>
    </source>
</evidence>
<proteinExistence type="evidence at protein level"/>